<sequence length="497" mass="55284">MSDVVLEIKNLSKSFGKNKVLDGINLTVRQGSVMGLMGENGAGKSTMMKCLFGIYTRDEGAISLLNKSIEFKNPKEALESGVAMVHQELNLCLDRTVTDNLFLGRYPTNFGIVDEIKMFESASSLFSSLNMNVNPKTIMRTMSVSQRQMVEIAKAVSYNAKLIVLDEPTSSLTEREVKKLFSIIRALQKKGVSFIYISHKMDEVFEVCDEVAVLRDGKMILSKPVAGTNMNEIISAMVGRSLDKRFPDVDNVPGEDFLKIENLKTKYAPVLEDISFTVRKGEILGLYGLVGAGRSELLEALFGIRTIESGSISINDKYLKFKSSKEAMAHGFALLTEERKLNGMFGKDTIEFNTVITNLNNYKTIGVLSKRKIREAANREIETMRTRCLSADQGISALSGGNQQKVIIGKWLERSPDVFLMDEPTRGIDVGAKYEIYQLIIKMAKEGKTIIVVSSEMPEILGITNRIAVMSNRRLAGIVNTKETDQETLLRLSAKYL</sequence>
<proteinExistence type="inferred from homology"/>
<feature type="chain" id="PRO_0000261376" description="Galactose/methyl galactoside import ATP-binding protein MglA">
    <location>
        <begin position="1"/>
        <end position="497"/>
    </location>
</feature>
<feature type="domain" description="ABC transporter 1" evidence="1">
    <location>
        <begin position="6"/>
        <end position="241"/>
    </location>
</feature>
<feature type="domain" description="ABC transporter 2" evidence="1">
    <location>
        <begin position="252"/>
        <end position="497"/>
    </location>
</feature>
<feature type="binding site" evidence="1">
    <location>
        <begin position="38"/>
        <end position="45"/>
    </location>
    <ligand>
        <name>ATP</name>
        <dbReference type="ChEBI" id="CHEBI:30616"/>
    </ligand>
</feature>
<feature type="sequence conflict" description="In Ref. 1; AAD05298." evidence="2" ref="1">
    <original>E</original>
    <variation>G</variation>
    <location>
        <position position="299"/>
    </location>
</feature>
<keyword id="KW-0067">ATP-binding</keyword>
<keyword id="KW-0997">Cell inner membrane</keyword>
<keyword id="KW-1003">Cell membrane</keyword>
<keyword id="KW-0472">Membrane</keyword>
<keyword id="KW-0547">Nucleotide-binding</keyword>
<keyword id="KW-1185">Reference proteome</keyword>
<keyword id="KW-0677">Repeat</keyword>
<keyword id="KW-0762">Sugar transport</keyword>
<keyword id="KW-1278">Translocase</keyword>
<keyword id="KW-0813">Transport</keyword>
<dbReference type="EC" id="7.5.2.11" evidence="1"/>
<dbReference type="EMBL" id="AF082511">
    <property type="protein sequence ID" value="AAD05298.1"/>
    <property type="molecule type" value="Genomic_DNA"/>
</dbReference>
<dbReference type="EMBL" id="AE017226">
    <property type="protein sequence ID" value="AAS12735.1"/>
    <property type="molecule type" value="Genomic_DNA"/>
</dbReference>
<dbReference type="RefSeq" id="NP_972816.1">
    <property type="nucleotide sequence ID" value="NC_002967.9"/>
</dbReference>
<dbReference type="RefSeq" id="WP_002680067.1">
    <property type="nucleotide sequence ID" value="NC_002967.9"/>
</dbReference>
<dbReference type="SMR" id="Q73KK2"/>
<dbReference type="STRING" id="243275.TDE_2216"/>
<dbReference type="PaxDb" id="243275-TDE_2216"/>
<dbReference type="GeneID" id="2739492"/>
<dbReference type="KEGG" id="tde:TDE_2216"/>
<dbReference type="PATRIC" id="fig|243275.7.peg.2093"/>
<dbReference type="eggNOG" id="COG1129">
    <property type="taxonomic scope" value="Bacteria"/>
</dbReference>
<dbReference type="HOGENOM" id="CLU_000604_92_3_12"/>
<dbReference type="OrthoDB" id="304830at2"/>
<dbReference type="BRENDA" id="7.5.2.11">
    <property type="organism ID" value="6426"/>
</dbReference>
<dbReference type="Proteomes" id="UP000008212">
    <property type="component" value="Chromosome"/>
</dbReference>
<dbReference type="GO" id="GO:0005886">
    <property type="term" value="C:plasma membrane"/>
    <property type="evidence" value="ECO:0007669"/>
    <property type="project" value="UniProtKB-SubCell"/>
</dbReference>
<dbReference type="GO" id="GO:0005524">
    <property type="term" value="F:ATP binding"/>
    <property type="evidence" value="ECO:0007669"/>
    <property type="project" value="UniProtKB-KW"/>
</dbReference>
<dbReference type="GO" id="GO:0016887">
    <property type="term" value="F:ATP hydrolysis activity"/>
    <property type="evidence" value="ECO:0007669"/>
    <property type="project" value="InterPro"/>
</dbReference>
<dbReference type="CDD" id="cd03216">
    <property type="entry name" value="ABC_Carb_Monos_I"/>
    <property type="match status" value="1"/>
</dbReference>
<dbReference type="CDD" id="cd03215">
    <property type="entry name" value="ABC_Carb_Monos_II"/>
    <property type="match status" value="1"/>
</dbReference>
<dbReference type="FunFam" id="3.40.50.300:FF:000127">
    <property type="entry name" value="Ribose import ATP-binding protein RbsA"/>
    <property type="match status" value="1"/>
</dbReference>
<dbReference type="Gene3D" id="3.40.50.300">
    <property type="entry name" value="P-loop containing nucleotide triphosphate hydrolases"/>
    <property type="match status" value="2"/>
</dbReference>
<dbReference type="InterPro" id="IPR003593">
    <property type="entry name" value="AAA+_ATPase"/>
</dbReference>
<dbReference type="InterPro" id="IPR050107">
    <property type="entry name" value="ABC_carbohydrate_import_ATPase"/>
</dbReference>
<dbReference type="InterPro" id="IPR003439">
    <property type="entry name" value="ABC_transporter-like_ATP-bd"/>
</dbReference>
<dbReference type="InterPro" id="IPR017871">
    <property type="entry name" value="ABC_transporter-like_CS"/>
</dbReference>
<dbReference type="InterPro" id="IPR027417">
    <property type="entry name" value="P-loop_NTPase"/>
</dbReference>
<dbReference type="PANTHER" id="PTHR43790">
    <property type="entry name" value="CARBOHYDRATE TRANSPORT ATP-BINDING PROTEIN MG119-RELATED"/>
    <property type="match status" value="1"/>
</dbReference>
<dbReference type="PANTHER" id="PTHR43790:SF7">
    <property type="entry name" value="GALACTOSE_METHYL GALACTOSIDE IMPORT ATP-BINDING PROTEIN MGLA"/>
    <property type="match status" value="1"/>
</dbReference>
<dbReference type="Pfam" id="PF00005">
    <property type="entry name" value="ABC_tran"/>
    <property type="match status" value="2"/>
</dbReference>
<dbReference type="SMART" id="SM00382">
    <property type="entry name" value="AAA"/>
    <property type="match status" value="2"/>
</dbReference>
<dbReference type="SUPFAM" id="SSF52540">
    <property type="entry name" value="P-loop containing nucleoside triphosphate hydrolases"/>
    <property type="match status" value="2"/>
</dbReference>
<dbReference type="PROSITE" id="PS00211">
    <property type="entry name" value="ABC_TRANSPORTER_1"/>
    <property type="match status" value="1"/>
</dbReference>
<dbReference type="PROSITE" id="PS50893">
    <property type="entry name" value="ABC_TRANSPORTER_2"/>
    <property type="match status" value="2"/>
</dbReference>
<dbReference type="PROSITE" id="PS51260">
    <property type="entry name" value="MGLA"/>
    <property type="match status" value="1"/>
</dbReference>
<protein>
    <recommendedName>
        <fullName evidence="1">Galactose/methyl galactoside import ATP-binding protein MglA</fullName>
        <ecNumber evidence="1">7.5.2.11</ecNumber>
    </recommendedName>
</protein>
<gene>
    <name evidence="1" type="primary">mglA</name>
    <name type="ordered locus">TDE_2216</name>
</gene>
<accession>Q73KK2</accession>
<accession>Q9ZGA2</accession>
<reference key="1">
    <citation type="journal article" date="2000" name="DNA Seq.">
        <title>MglA and mglB of Treponema denticola; similarity to ABC transport and spa genes.</title>
        <authorList>
            <person name="Lepine G."/>
            <person name="Ellen R.P."/>
        </authorList>
    </citation>
    <scope>NUCLEOTIDE SEQUENCE [GENOMIC DNA]</scope>
    <source>
        <strain>ATCC 35405 / DSM 14222 / CIP 103919 / JCM 8153 / KCTC 15104</strain>
    </source>
</reference>
<reference key="2">
    <citation type="journal article" date="2004" name="Proc. Natl. Acad. Sci. U.S.A.">
        <title>Comparison of the genome of the oral pathogen Treponema denticola with other spirochete genomes.</title>
        <authorList>
            <person name="Seshadri R."/>
            <person name="Myers G.S.A."/>
            <person name="Tettelin H."/>
            <person name="Eisen J.A."/>
            <person name="Heidelberg J.F."/>
            <person name="Dodson R.J."/>
            <person name="Davidsen T.M."/>
            <person name="DeBoy R.T."/>
            <person name="Fouts D.E."/>
            <person name="Haft D.H."/>
            <person name="Selengut J."/>
            <person name="Ren Q."/>
            <person name="Brinkac L.M."/>
            <person name="Madupu R."/>
            <person name="Kolonay J.F."/>
            <person name="Durkin S.A."/>
            <person name="Daugherty S.C."/>
            <person name="Shetty J."/>
            <person name="Shvartsbeyn A."/>
            <person name="Gebregeorgis E."/>
            <person name="Geer K."/>
            <person name="Tsegaye G."/>
            <person name="Malek J.A."/>
            <person name="Ayodeji B."/>
            <person name="Shatsman S."/>
            <person name="McLeod M.P."/>
            <person name="Smajs D."/>
            <person name="Howell J.K."/>
            <person name="Pal S."/>
            <person name="Amin A."/>
            <person name="Vashisth P."/>
            <person name="McNeill T.Z."/>
            <person name="Xiang Q."/>
            <person name="Sodergren E."/>
            <person name="Baca E."/>
            <person name="Weinstock G.M."/>
            <person name="Norris S.J."/>
            <person name="Fraser C.M."/>
            <person name="Paulsen I.T."/>
        </authorList>
    </citation>
    <scope>NUCLEOTIDE SEQUENCE [LARGE SCALE GENOMIC DNA]</scope>
    <source>
        <strain>ATCC 35405 / DSM 14222 / CIP 103919 / JCM 8153 / KCTC 15104</strain>
    </source>
</reference>
<comment type="function">
    <text evidence="1">Part of the ABC transporter complex MglABC involved in galactose/methyl galactoside import. Responsible for energy coupling to the transport system.</text>
</comment>
<comment type="catalytic activity">
    <reaction evidence="1">
        <text>D-galactose(out) + ATP + H2O = D-galactose(in) + ADP + phosphate + H(+)</text>
        <dbReference type="Rhea" id="RHEA:60156"/>
        <dbReference type="ChEBI" id="CHEBI:4139"/>
        <dbReference type="ChEBI" id="CHEBI:15377"/>
        <dbReference type="ChEBI" id="CHEBI:15378"/>
        <dbReference type="ChEBI" id="CHEBI:30616"/>
        <dbReference type="ChEBI" id="CHEBI:43474"/>
        <dbReference type="ChEBI" id="CHEBI:456216"/>
        <dbReference type="EC" id="7.5.2.11"/>
    </reaction>
    <physiologicalReaction direction="left-to-right" evidence="1">
        <dbReference type="Rhea" id="RHEA:60157"/>
    </physiologicalReaction>
</comment>
<comment type="catalytic activity">
    <reaction evidence="1">
        <text>methyl beta-D-galactoside(out) + ATP + H2O = methyl beta-D-galactoside(in) + ADP + phosphate + H(+)</text>
        <dbReference type="Rhea" id="RHEA:72531"/>
        <dbReference type="ChEBI" id="CHEBI:15377"/>
        <dbReference type="ChEBI" id="CHEBI:15378"/>
        <dbReference type="ChEBI" id="CHEBI:17540"/>
        <dbReference type="ChEBI" id="CHEBI:30616"/>
        <dbReference type="ChEBI" id="CHEBI:43474"/>
        <dbReference type="ChEBI" id="CHEBI:456216"/>
    </reaction>
    <physiologicalReaction direction="left-to-right" evidence="1">
        <dbReference type="Rhea" id="RHEA:72532"/>
    </physiologicalReaction>
</comment>
<comment type="subunit">
    <text evidence="1">The complex is composed of one ATP-binding protein (MglA), two transmembrane proteins (MglC) and a solute-binding protein (MglB).</text>
</comment>
<comment type="subcellular location">
    <subcellularLocation>
        <location evidence="1">Cell inner membrane</location>
        <topology evidence="1">Peripheral membrane protein</topology>
    </subcellularLocation>
</comment>
<comment type="similarity">
    <text evidence="1">Belongs to the ABC transporter superfamily. Galactose/methyl galactoside importer (TC 3.A.1.2.3) family.</text>
</comment>
<name>MGLA_TREDE</name>
<evidence type="ECO:0000255" key="1">
    <source>
        <dbReference type="HAMAP-Rule" id="MF_01717"/>
    </source>
</evidence>
<evidence type="ECO:0000305" key="2"/>
<organism>
    <name type="scientific">Treponema denticola (strain ATCC 35405 / DSM 14222 / CIP 103919 / JCM 8153 / KCTC 15104)</name>
    <dbReference type="NCBI Taxonomy" id="243275"/>
    <lineage>
        <taxon>Bacteria</taxon>
        <taxon>Pseudomonadati</taxon>
        <taxon>Spirochaetota</taxon>
        <taxon>Spirochaetia</taxon>
        <taxon>Spirochaetales</taxon>
        <taxon>Treponemataceae</taxon>
        <taxon>Treponema</taxon>
    </lineage>
</organism>